<gene>
    <name evidence="1" type="primary">psbN</name>
</gene>
<accession>Q7J199</accession>
<accession>Q3V506</accession>
<proteinExistence type="inferred from homology"/>
<sequence>METATLVAIFISGLLVSFTGYALYTAFGQPSQQLRDPFEEHGD</sequence>
<reference key="1">
    <citation type="journal article" date="2000" name="Am. J. Bot.">
        <title>Utility of 17 chloroplast genes for inferring the phylogeny of the basal angiosperms.</title>
        <authorList>
            <person name="Graham S.W."/>
            <person name="Olmstead R.G."/>
        </authorList>
    </citation>
    <scope>NUCLEOTIDE SEQUENCE [GENOMIC DNA]</scope>
</reference>
<reference key="2">
    <citation type="journal article" date="2005" name="Mol. Biol. Evol.">
        <title>Analysis of Acorus calamus chloroplast genome and its phylogenetic implications.</title>
        <authorList>
            <person name="Goremykin V.V."/>
            <person name="Holland B."/>
            <person name="Hirsch-Ernst K.I."/>
            <person name="Hellwig F.H."/>
        </authorList>
    </citation>
    <scope>NUCLEOTIDE SEQUENCE [LARGE SCALE GENOMIC DNA]</scope>
</reference>
<name>PSBN_ACOCL</name>
<dbReference type="EMBL" id="AF123843">
    <property type="protein sequence ID" value="AAG26252.1"/>
    <property type="molecule type" value="Genomic_DNA"/>
</dbReference>
<dbReference type="EMBL" id="AJ879453">
    <property type="protein sequence ID" value="CAI53822.1"/>
    <property type="molecule type" value="Genomic_DNA"/>
</dbReference>
<dbReference type="RefSeq" id="YP_319791.1">
    <property type="nucleotide sequence ID" value="NC_007407.1"/>
</dbReference>
<dbReference type="SMR" id="Q7J199"/>
<dbReference type="GeneID" id="3677474"/>
<dbReference type="GO" id="GO:0009535">
    <property type="term" value="C:chloroplast thylakoid membrane"/>
    <property type="evidence" value="ECO:0007669"/>
    <property type="project" value="UniProtKB-SubCell"/>
</dbReference>
<dbReference type="GO" id="GO:0015979">
    <property type="term" value="P:photosynthesis"/>
    <property type="evidence" value="ECO:0007669"/>
    <property type="project" value="InterPro"/>
</dbReference>
<dbReference type="HAMAP" id="MF_00293">
    <property type="entry name" value="PSII_PsbN"/>
    <property type="match status" value="1"/>
</dbReference>
<dbReference type="InterPro" id="IPR003398">
    <property type="entry name" value="PSII_PsbN"/>
</dbReference>
<dbReference type="PANTHER" id="PTHR35326">
    <property type="entry name" value="PROTEIN PSBN"/>
    <property type="match status" value="1"/>
</dbReference>
<dbReference type="PANTHER" id="PTHR35326:SF3">
    <property type="entry name" value="PROTEIN PSBN"/>
    <property type="match status" value="1"/>
</dbReference>
<dbReference type="Pfam" id="PF02468">
    <property type="entry name" value="PsbN"/>
    <property type="match status" value="1"/>
</dbReference>
<evidence type="ECO:0000255" key="1">
    <source>
        <dbReference type="HAMAP-Rule" id="MF_00293"/>
    </source>
</evidence>
<protein>
    <recommendedName>
        <fullName evidence="1">Protein PsbN</fullName>
    </recommendedName>
</protein>
<organism>
    <name type="scientific">Acorus calamus</name>
    <name type="common">Sweet flag</name>
    <dbReference type="NCBI Taxonomy" id="4465"/>
    <lineage>
        <taxon>Eukaryota</taxon>
        <taxon>Viridiplantae</taxon>
        <taxon>Streptophyta</taxon>
        <taxon>Embryophyta</taxon>
        <taxon>Tracheophyta</taxon>
        <taxon>Spermatophyta</taxon>
        <taxon>Magnoliopsida</taxon>
        <taxon>Liliopsida</taxon>
        <taxon>Acoraceae</taxon>
        <taxon>Acorus</taxon>
    </lineage>
</organism>
<feature type="chain" id="PRO_0000207859" description="Protein PsbN">
    <location>
        <begin position="1"/>
        <end position="43"/>
    </location>
</feature>
<feature type="transmembrane region" description="Helical" evidence="1">
    <location>
        <begin position="7"/>
        <end position="27"/>
    </location>
</feature>
<geneLocation type="chloroplast"/>
<keyword id="KW-0150">Chloroplast</keyword>
<keyword id="KW-0472">Membrane</keyword>
<keyword id="KW-0934">Plastid</keyword>
<keyword id="KW-0793">Thylakoid</keyword>
<keyword id="KW-0812">Transmembrane</keyword>
<keyword id="KW-1133">Transmembrane helix</keyword>
<comment type="function">
    <text evidence="1">May play a role in photosystem I and II biogenesis.</text>
</comment>
<comment type="subcellular location">
    <subcellularLocation>
        <location evidence="1">Plastid</location>
        <location evidence="1">Chloroplast thylakoid membrane</location>
        <topology evidence="1">Single-pass membrane protein</topology>
    </subcellularLocation>
</comment>
<comment type="similarity">
    <text evidence="1">Belongs to the PsbN family.</text>
</comment>
<comment type="caution">
    <text evidence="1">Originally thought to be a component of PSII; based on experiments in Synechocystis, N.tabacum and barley, and its absence from PSII in T.elongatus and T.vulcanus, this is probably not true.</text>
</comment>